<comment type="function">
    <text>May have a possible regulatory function on the expression of the other AFA-III genes.</text>
</comment>
<comment type="similarity">
    <text evidence="1">To E.coli PapI and DaaF.</text>
</comment>
<geneLocation type="plasmid">
    <name>pIL1055</name>
</geneLocation>
<dbReference type="EMBL" id="X76688">
    <property type="protein sequence ID" value="CAA54112.1"/>
    <property type="molecule type" value="Genomic_DNA"/>
</dbReference>
<dbReference type="PIR" id="C55545">
    <property type="entry name" value="C55545"/>
</dbReference>
<dbReference type="RefSeq" id="WP_032143372.1">
    <property type="nucleotide sequence ID" value="NZ_UILZ01000065.1"/>
</dbReference>
<dbReference type="SMR" id="Q47037"/>
<dbReference type="GO" id="GO:0006355">
    <property type="term" value="P:regulation of DNA-templated transcription"/>
    <property type="evidence" value="ECO:0007669"/>
    <property type="project" value="InterPro"/>
</dbReference>
<dbReference type="Gene3D" id="1.10.10.10">
    <property type="entry name" value="Winged helix-like DNA-binding domain superfamily/Winged helix DNA-binding domain"/>
    <property type="match status" value="1"/>
</dbReference>
<dbReference type="InterPro" id="IPR006793">
    <property type="entry name" value="FaeA"/>
</dbReference>
<dbReference type="InterPro" id="IPR036388">
    <property type="entry name" value="WH-like_DNA-bd_sf"/>
</dbReference>
<dbReference type="InterPro" id="IPR036390">
    <property type="entry name" value="WH_DNA-bd_sf"/>
</dbReference>
<dbReference type="Pfam" id="PF04703">
    <property type="entry name" value="FaeA"/>
    <property type="match status" value="1"/>
</dbReference>
<dbReference type="SUPFAM" id="SSF46785">
    <property type="entry name" value="Winged helix' DNA-binding domain"/>
    <property type="match status" value="1"/>
</dbReference>
<feature type="chain" id="PRO_0000064476" description="Dr hemagglutinin AFA-III operon regulatory protein AfaF">
    <location>
        <begin position="1"/>
        <end position="85"/>
    </location>
</feature>
<keyword id="KW-0614">Plasmid</keyword>
<keyword id="KW-0804">Transcription</keyword>
<keyword id="KW-0805">Transcription regulation</keyword>
<evidence type="ECO:0000305" key="1"/>
<sequence>MKINKLTLNERKNDILSYFSEINTPFRTSEVAEHLGVSAYQARHYLQCLEKEGKIKRSPVRRGASTLWEISAVTEPSVKTDRIAD</sequence>
<name>AFAF_ECOLX</name>
<organism>
    <name type="scientific">Escherichia coli</name>
    <dbReference type="NCBI Taxonomy" id="562"/>
    <lineage>
        <taxon>Bacteria</taxon>
        <taxon>Pseudomonadati</taxon>
        <taxon>Pseudomonadota</taxon>
        <taxon>Gammaproteobacteria</taxon>
        <taxon>Enterobacterales</taxon>
        <taxon>Enterobacteriaceae</taxon>
        <taxon>Escherichia</taxon>
    </lineage>
</organism>
<protein>
    <recommendedName>
        <fullName>Dr hemagglutinin AFA-III operon regulatory protein AfaF</fullName>
    </recommendedName>
</protein>
<accession>Q47037</accession>
<reference key="1">
    <citation type="journal article" date="1994" name="J. Bacteriol.">
        <title>Nucleotide sequence of the afimbrial-adhesin-encoding afa-3 gene cluster and its translocation via flanking IS1 insertion sequences.</title>
        <authorList>
            <person name="Garcia M.-I."/>
            <person name="Labigne A."/>
            <person name="le Bouguenec C.L."/>
        </authorList>
    </citation>
    <scope>NUCLEOTIDE SEQUENCE [GENOMIC DNA]</scope>
    <source>
        <strain>A30 / UPEC</strain>
    </source>
</reference>
<gene>
    <name type="primary">afaF</name>
</gene>
<proteinExistence type="predicted"/>